<keyword id="KW-0963">Cytoplasm</keyword>
<keyword id="KW-0325">Glycoprotein</keyword>
<keyword id="KW-0617">Plasminogen activation</keyword>
<keyword id="KW-0646">Protease inhibitor</keyword>
<keyword id="KW-1185">Reference proteome</keyword>
<keyword id="KW-0964">Secreted</keyword>
<keyword id="KW-0722">Serine protease inhibitor</keyword>
<keyword id="KW-0732">Signal</keyword>
<proteinExistence type="evidence at protein level"/>
<gene>
    <name type="primary">Serpinb2</name>
    <name type="synonym">Pai2</name>
    <name type="synonym">Planh2</name>
</gene>
<reference key="1">
    <citation type="journal article" date="1989" name="EMBO J.">
        <title>Facultative polypeptide translocation allows a single mRNA to encode the secreted and cytosolic forms of plasminogen activators inhibitor 2.</title>
        <authorList>
            <person name="Belin D."/>
            <person name="Wohlwend A."/>
            <person name="Schleuning W.-D."/>
            <person name="Kruithof E.K.O."/>
            <person name="Vassalli J.-D."/>
        </authorList>
    </citation>
    <scope>NUCLEOTIDE SEQUENCE [MRNA] OF 1-27</scope>
    <source>
        <strain>AKR/J</strain>
        <tissue>Myeloid</tissue>
    </source>
</reference>
<reference key="2">
    <citation type="submission" date="1989-09" db="EMBL/GenBank/DDBJ databases">
        <authorList>
            <person name="Belin D."/>
        </authorList>
    </citation>
    <scope>NUCLEOTIDE SEQUENCE [GENOMIC DNA]</scope>
    <source>
        <strain>AKR/J</strain>
        <tissue>Myeloid</tissue>
    </source>
</reference>
<reference key="3">
    <citation type="submission" date="1997-07" db="EMBL/GenBank/DDBJ databases">
        <title>Sequence and tissue-specific expression of the murine PAI-2 gene.</title>
        <authorList>
            <person name="Belin D."/>
            <person name="Tapparel C."/>
            <person name="Sappino N."/>
            <person name="Silva F."/>
        </authorList>
    </citation>
    <scope>NUCLEOTIDE SEQUENCE [GENOMIC DNA]</scope>
    <scope>VARIANTS GLU-239; TYR-258; ILE-259 AND ARG-284</scope>
    <source>
        <strain>129</strain>
        <tissue>Liver</tissue>
    </source>
</reference>
<reference key="4">
    <citation type="journal article" date="1999" name="Proc. Natl. Acad. Sci. U.S.A.">
        <title>The plasminogen activator inhibitor-2 gene is not required for normal murine development or survival.</title>
        <authorList>
            <person name="Dougherty K.M."/>
            <person name="Pearson J.M."/>
            <person name="Yang A.Y."/>
            <person name="Westrick R.J."/>
            <person name="Baker M.S."/>
            <person name="Ginsburg D."/>
        </authorList>
    </citation>
    <scope>NUCLEOTIDE SEQUENCE [GENOMIC DNA] OF 1-34; 54-74; 89-115; 124-156; 163-237 AND 265-302</scope>
    <source>
        <strain>129/Sv</strain>
    </source>
</reference>
<reference key="5">
    <citation type="journal article" date="2010" name="Cell">
        <title>A tissue-specific atlas of mouse protein phosphorylation and expression.</title>
        <authorList>
            <person name="Huttlin E.L."/>
            <person name="Jedrychowski M.P."/>
            <person name="Elias J.E."/>
            <person name="Goswami T."/>
            <person name="Rad R."/>
            <person name="Beausoleil S.A."/>
            <person name="Villen J."/>
            <person name="Haas W."/>
            <person name="Sowa M.E."/>
            <person name="Gygi S.P."/>
        </authorList>
    </citation>
    <scope>IDENTIFICATION BY MASS SPECTROMETRY [LARGE SCALE ANALYSIS]</scope>
    <source>
        <tissue>Spleen</tissue>
    </source>
</reference>
<feature type="chain" id="PRO_0000223297" description="Plasminogen activator inhibitor 2, macrophage">
    <location>
        <begin position="1"/>
        <end position="415"/>
    </location>
</feature>
<feature type="signal peptide" description="Not cleaved">
    <location>
        <begin position="1"/>
        <end status="unknown"/>
    </location>
</feature>
<feature type="site" description="Reactive bond">
    <location>
        <begin position="380"/>
        <end position="381"/>
    </location>
</feature>
<feature type="glycosylation site" description="N-linked (GlcNAc...) asparagine" evidence="2">
    <location>
        <position position="23"/>
    </location>
</feature>
<feature type="glycosylation site" description="N-linked (GlcNAc...) asparagine" evidence="2">
    <location>
        <position position="75"/>
    </location>
</feature>
<feature type="glycosylation site" description="N-linked (GlcNAc...) asparagine" evidence="2">
    <location>
        <position position="261"/>
    </location>
</feature>
<feature type="glycosylation site" description="N-linked (GlcNAc...) asparagine" evidence="2">
    <location>
        <position position="339"/>
    </location>
</feature>
<feature type="sequence variant" evidence="3">
    <original>A</original>
    <variation>E</variation>
    <location>
        <position position="239"/>
    </location>
</feature>
<feature type="sequence variant" evidence="3">
    <original>H</original>
    <variation>Y</variation>
    <location>
        <position position="258"/>
    </location>
</feature>
<feature type="sequence variant" evidence="3">
    <original>T</original>
    <variation>I</variation>
    <location>
        <position position="259"/>
    </location>
</feature>
<feature type="sequence variant" evidence="3">
    <original>S</original>
    <variation>R</variation>
    <location>
        <position position="284"/>
    </location>
</feature>
<feature type="sequence conflict" description="In Ref. 3 and 4." evidence="4" ref="3 4">
    <original>A</original>
    <variation>T</variation>
    <location>
        <position position="55"/>
    </location>
</feature>
<evidence type="ECO:0000250" key="1"/>
<evidence type="ECO:0000255" key="2"/>
<evidence type="ECO:0000269" key="3">
    <source ref="3"/>
</evidence>
<evidence type="ECO:0000305" key="4"/>
<sequence length="415" mass="46292">MEELSMANTMFALNLLKQIEKSNSTQNIFISPWSISSTLAIVLLGAGGNTEQQMAKVLQFNEIGSYGITTRNPENFSGCDFAQQIQKENYPSAILQAQAGDKIHSAFSSLSSTINTPQGDYLLESANKLFGEKSARFKEEYIQLSKKYYSTEPEAVDFLECAEEAREKINSWVKTQTKGEIPNLLPEGSVDEDTKMVLVNAVYFKGKWKTPFEKKLNGLYPFRVNSHESIPVQMMFLHAKLNIGYIKDLKTQILELPHTGNISMLLLLPDEIEDASTGLELLESEINFANFNKWISKDTLDEDDVVVYIPKFKLAQSYELKSILQSMGMEDAFNKGKANFSGMSERNDLFLSEVFHQASVDVTEEGTVAAGGTGAVMTGRTGHGGPQFVADHPFLFFIMDKITHTILFVGRFSSP</sequence>
<dbReference type="EMBL" id="X16490">
    <property type="protein sequence ID" value="CAA34507.1"/>
    <property type="molecule type" value="mRNA"/>
</dbReference>
<dbReference type="EMBL" id="AJ000386">
    <property type="protein sequence ID" value="CAA04047.1"/>
    <property type="molecule type" value="Genomic_DNA"/>
</dbReference>
<dbReference type="EMBL" id="AJ000384">
    <property type="protein sequence ID" value="CAA04047.1"/>
    <property type="status" value="JOINED"/>
    <property type="molecule type" value="Genomic_DNA"/>
</dbReference>
<dbReference type="EMBL" id="AJ000385">
    <property type="protein sequence ID" value="CAA04047.1"/>
    <property type="status" value="JOINED"/>
    <property type="molecule type" value="Genomic_DNA"/>
</dbReference>
<dbReference type="EMBL" id="AF069683">
    <property type="protein sequence ID" value="AAD08915.1"/>
    <property type="molecule type" value="Genomic_DNA"/>
</dbReference>
<dbReference type="EMBL" id="AF069685">
    <property type="protein sequence ID" value="AAD08916.1"/>
    <property type="molecule type" value="Genomic_DNA"/>
</dbReference>
<dbReference type="EMBL" id="AF069684">
    <property type="protein sequence ID" value="AAD08916.1"/>
    <property type="status" value="JOINED"/>
    <property type="molecule type" value="Genomic_DNA"/>
</dbReference>
<dbReference type="EMBL" id="AF069687">
    <property type="protein sequence ID" value="AAD08917.1"/>
    <property type="molecule type" value="Genomic_DNA"/>
</dbReference>
<dbReference type="EMBL" id="AF069686">
    <property type="protein sequence ID" value="AAD08917.1"/>
    <property type="status" value="JOINED"/>
    <property type="molecule type" value="Genomic_DNA"/>
</dbReference>
<dbReference type="EMBL" id="AF069689">
    <property type="protein sequence ID" value="AAD08918.1"/>
    <property type="molecule type" value="Genomic_DNA"/>
</dbReference>
<dbReference type="EMBL" id="AF069688">
    <property type="protein sequence ID" value="AAD08918.1"/>
    <property type="status" value="JOINED"/>
    <property type="molecule type" value="Genomic_DNA"/>
</dbReference>
<dbReference type="EMBL" id="AF069690">
    <property type="protein sequence ID" value="AAD08919.1"/>
    <property type="molecule type" value="Genomic_DNA"/>
</dbReference>
<dbReference type="EMBL" id="AF069692">
    <property type="protein sequence ID" value="AAD08920.1"/>
    <property type="molecule type" value="Genomic_DNA"/>
</dbReference>
<dbReference type="EMBL" id="AF069691">
    <property type="protein sequence ID" value="AAD08920.1"/>
    <property type="status" value="JOINED"/>
    <property type="molecule type" value="Genomic_DNA"/>
</dbReference>
<dbReference type="EMBL" id="AF069694">
    <property type="protein sequence ID" value="AAD08921.1"/>
    <property type="molecule type" value="Genomic_DNA"/>
</dbReference>
<dbReference type="EMBL" id="AF069693">
    <property type="protein sequence ID" value="AAD08921.1"/>
    <property type="status" value="JOINED"/>
    <property type="molecule type" value="Genomic_DNA"/>
</dbReference>
<dbReference type="CCDS" id="CCDS15219.1"/>
<dbReference type="PIR" id="S20047">
    <property type="entry name" value="S20047"/>
</dbReference>
<dbReference type="RefSeq" id="NP_001167641.1">
    <property type="nucleotide sequence ID" value="NM_001174170.1"/>
</dbReference>
<dbReference type="RefSeq" id="NP_035241.1">
    <property type="nucleotide sequence ID" value="NM_011111.4"/>
</dbReference>
<dbReference type="SMR" id="P12388"/>
<dbReference type="FunCoup" id="P12388">
    <property type="interactions" value="86"/>
</dbReference>
<dbReference type="STRING" id="10090.ENSMUSP00000065277"/>
<dbReference type="MEROPS" id="I04.007"/>
<dbReference type="GlyCosmos" id="P12388">
    <property type="glycosylation" value="4 sites, No reported glycans"/>
</dbReference>
<dbReference type="GlyGen" id="P12388">
    <property type="glycosylation" value="4 sites"/>
</dbReference>
<dbReference type="PhosphoSitePlus" id="P12388"/>
<dbReference type="PaxDb" id="10090-ENSMUSP00000065277"/>
<dbReference type="PeptideAtlas" id="P12388"/>
<dbReference type="ProteomicsDB" id="294374"/>
<dbReference type="Pumba" id="P12388"/>
<dbReference type="Antibodypedia" id="1909">
    <property type="antibodies" value="483 antibodies from 34 providers"/>
</dbReference>
<dbReference type="DNASU" id="18788"/>
<dbReference type="Ensembl" id="ENSMUST00000009356.11">
    <property type="protein sequence ID" value="ENSMUSP00000009356.5"/>
    <property type="gene ID" value="ENSMUSG00000062345.11"/>
</dbReference>
<dbReference type="Ensembl" id="ENSMUST00000064916.9">
    <property type="protein sequence ID" value="ENSMUSP00000065277.3"/>
    <property type="gene ID" value="ENSMUSG00000062345.11"/>
</dbReference>
<dbReference type="GeneID" id="18788"/>
<dbReference type="KEGG" id="mmu:18788"/>
<dbReference type="UCSC" id="uc007chn.2">
    <property type="organism name" value="mouse"/>
</dbReference>
<dbReference type="AGR" id="MGI:97609"/>
<dbReference type="CTD" id="5055"/>
<dbReference type="MGI" id="MGI:97609">
    <property type="gene designation" value="Serpinb2"/>
</dbReference>
<dbReference type="VEuPathDB" id="HostDB:ENSMUSG00000062345"/>
<dbReference type="eggNOG" id="KOG2392">
    <property type="taxonomic scope" value="Eukaryota"/>
</dbReference>
<dbReference type="GeneTree" id="ENSGT00940000161637"/>
<dbReference type="HOGENOM" id="CLU_023330_0_2_1"/>
<dbReference type="InParanoid" id="P12388"/>
<dbReference type="OMA" id="MEDLYVA"/>
<dbReference type="OrthoDB" id="671595at2759"/>
<dbReference type="PhylomeDB" id="P12388"/>
<dbReference type="TreeFam" id="TF352619"/>
<dbReference type="Reactome" id="R-MMU-75205">
    <property type="pathway name" value="Dissolution of Fibrin Clot"/>
</dbReference>
<dbReference type="BioGRID-ORCS" id="18788">
    <property type="hits" value="2 hits in 81 CRISPR screens"/>
</dbReference>
<dbReference type="ChiTaRS" id="Serpinb2">
    <property type="organism name" value="mouse"/>
</dbReference>
<dbReference type="PRO" id="PR:P12388"/>
<dbReference type="Proteomes" id="UP000000589">
    <property type="component" value="Chromosome 1"/>
</dbReference>
<dbReference type="RNAct" id="P12388">
    <property type="molecule type" value="protein"/>
</dbReference>
<dbReference type="Bgee" id="ENSMUSG00000062345">
    <property type="expression patterns" value="Expressed in skin of external ear and 63 other cell types or tissues"/>
</dbReference>
<dbReference type="ExpressionAtlas" id="P12388">
    <property type="expression patterns" value="baseline and differential"/>
</dbReference>
<dbReference type="GO" id="GO:0001533">
    <property type="term" value="C:cornified envelope"/>
    <property type="evidence" value="ECO:0000314"/>
    <property type="project" value="MGI"/>
</dbReference>
<dbReference type="GO" id="GO:0005737">
    <property type="term" value="C:cytoplasm"/>
    <property type="evidence" value="ECO:0007669"/>
    <property type="project" value="UniProtKB-SubCell"/>
</dbReference>
<dbReference type="GO" id="GO:0005615">
    <property type="term" value="C:extracellular space"/>
    <property type="evidence" value="ECO:0007669"/>
    <property type="project" value="InterPro"/>
</dbReference>
<dbReference type="GO" id="GO:0004867">
    <property type="term" value="F:serine-type endopeptidase inhibitor activity"/>
    <property type="evidence" value="ECO:0007669"/>
    <property type="project" value="UniProtKB-KW"/>
</dbReference>
<dbReference type="GO" id="GO:0043066">
    <property type="term" value="P:negative regulation of apoptotic process"/>
    <property type="evidence" value="ECO:0007669"/>
    <property type="project" value="InterPro"/>
</dbReference>
<dbReference type="CDD" id="cd19562">
    <property type="entry name" value="serpinB2_PAI-2"/>
    <property type="match status" value="1"/>
</dbReference>
<dbReference type="FunFam" id="3.30.497.10:FF:000001">
    <property type="entry name" value="Serine protease inhibitor"/>
    <property type="match status" value="1"/>
</dbReference>
<dbReference type="FunFam" id="2.30.39.10:FF:000001">
    <property type="entry name" value="Serpin family B member 2"/>
    <property type="match status" value="1"/>
</dbReference>
<dbReference type="Gene3D" id="2.30.39.10">
    <property type="entry name" value="Alpha-1-antitrypsin, domain 1"/>
    <property type="match status" value="1"/>
</dbReference>
<dbReference type="Gene3D" id="3.30.497.10">
    <property type="entry name" value="Antithrombin, subunit I, domain 2"/>
    <property type="match status" value="1"/>
</dbReference>
<dbReference type="InterPro" id="IPR015556">
    <property type="entry name" value="PAI-2"/>
</dbReference>
<dbReference type="InterPro" id="IPR023795">
    <property type="entry name" value="Serpin_CS"/>
</dbReference>
<dbReference type="InterPro" id="IPR023796">
    <property type="entry name" value="Serpin_dom"/>
</dbReference>
<dbReference type="InterPro" id="IPR000215">
    <property type="entry name" value="Serpin_fam"/>
</dbReference>
<dbReference type="InterPro" id="IPR036186">
    <property type="entry name" value="Serpin_sf"/>
</dbReference>
<dbReference type="InterPro" id="IPR042178">
    <property type="entry name" value="Serpin_sf_1"/>
</dbReference>
<dbReference type="InterPro" id="IPR042185">
    <property type="entry name" value="Serpin_sf_2"/>
</dbReference>
<dbReference type="PANTHER" id="PTHR11461:SF61">
    <property type="entry name" value="PLASMINOGEN ACTIVATOR INHIBITOR 2"/>
    <property type="match status" value="1"/>
</dbReference>
<dbReference type="PANTHER" id="PTHR11461">
    <property type="entry name" value="SERINE PROTEASE INHIBITOR, SERPIN"/>
    <property type="match status" value="1"/>
</dbReference>
<dbReference type="Pfam" id="PF00079">
    <property type="entry name" value="Serpin"/>
    <property type="match status" value="1"/>
</dbReference>
<dbReference type="SMART" id="SM00093">
    <property type="entry name" value="SERPIN"/>
    <property type="match status" value="1"/>
</dbReference>
<dbReference type="SUPFAM" id="SSF56574">
    <property type="entry name" value="Serpins"/>
    <property type="match status" value="1"/>
</dbReference>
<dbReference type="PROSITE" id="PS00284">
    <property type="entry name" value="SERPIN"/>
    <property type="match status" value="1"/>
</dbReference>
<name>PAI2_MOUSE</name>
<comment type="function">
    <text>Inhibits urokinase-type plasminogen activator. The monocyte derived PAI-2 is distinct from the endothelial cell-derived PAI-1. Not required for normal murine development or survival.</text>
</comment>
<comment type="subunit">
    <text evidence="1">Interacts with PSMB1.</text>
</comment>
<comment type="subcellular location">
    <subcellularLocation>
        <location>Cytoplasm</location>
    </subcellularLocation>
    <subcellularLocation>
        <location>Secreted</location>
        <location>Extracellular space</location>
    </subcellularLocation>
</comment>
<comment type="PTM">
    <text>The signal sequence is not cleaved.</text>
</comment>
<comment type="similarity">
    <text evidence="4">Belongs to the serpin family. Ov-serpin subfamily.</text>
</comment>
<protein>
    <recommendedName>
        <fullName>Plasminogen activator inhibitor 2, macrophage</fullName>
        <shortName>PAI-2</shortName>
    </recommendedName>
    <alternativeName>
        <fullName>Serpin B2</fullName>
    </alternativeName>
</protein>
<organism>
    <name type="scientific">Mus musculus</name>
    <name type="common">Mouse</name>
    <dbReference type="NCBI Taxonomy" id="10090"/>
    <lineage>
        <taxon>Eukaryota</taxon>
        <taxon>Metazoa</taxon>
        <taxon>Chordata</taxon>
        <taxon>Craniata</taxon>
        <taxon>Vertebrata</taxon>
        <taxon>Euteleostomi</taxon>
        <taxon>Mammalia</taxon>
        <taxon>Eutheria</taxon>
        <taxon>Euarchontoglires</taxon>
        <taxon>Glires</taxon>
        <taxon>Rodentia</taxon>
        <taxon>Myomorpha</taxon>
        <taxon>Muroidea</taxon>
        <taxon>Muridae</taxon>
        <taxon>Murinae</taxon>
        <taxon>Mus</taxon>
        <taxon>Mus</taxon>
    </lineage>
</organism>
<accession>P12388</accession>
<accession>O35687</accession>
<accession>Q9QWP6</accession>
<accession>Q9QWP7</accession>
<accession>Q9QWP8</accession>
<accession>Q9QWP9</accession>
<accession>Q9QWQ0</accession>
<accession>Q9QWZ5</accession>
<accession>Q9QWZ6</accession>